<gene>
    <name evidence="3" type="primary">GT5</name>
</gene>
<name>UGT_FRAAN</name>
<feature type="chain" id="PRO_0000413771" description="Putative UDP-glucose glucosyltransferase">
    <location>
        <begin position="1"/>
        <end position="475"/>
    </location>
</feature>
<dbReference type="EC" id="2.4.1.-" evidence="1"/>
<dbReference type="EMBL" id="DQ289586">
    <property type="protein sequence ID" value="ABB92747.1"/>
    <property type="molecule type" value="mRNA"/>
</dbReference>
<dbReference type="SMR" id="Q2V6K1"/>
<dbReference type="CAZy" id="GT1">
    <property type="family name" value="Glycosyltransferase Family 1"/>
</dbReference>
<dbReference type="BRENDA" id="2.4.1.177">
    <property type="organism ID" value="2320"/>
</dbReference>
<dbReference type="GO" id="GO:0080043">
    <property type="term" value="F:quercetin 3-O-glucosyltransferase activity"/>
    <property type="evidence" value="ECO:0007669"/>
    <property type="project" value="TreeGrafter"/>
</dbReference>
<dbReference type="GO" id="GO:0080044">
    <property type="term" value="F:quercetin 7-O-glucosyltransferase activity"/>
    <property type="evidence" value="ECO:0007669"/>
    <property type="project" value="TreeGrafter"/>
</dbReference>
<dbReference type="CDD" id="cd03784">
    <property type="entry name" value="GT1_Gtf-like"/>
    <property type="match status" value="1"/>
</dbReference>
<dbReference type="FunFam" id="3.40.50.2000:FF:000019">
    <property type="entry name" value="Glycosyltransferase"/>
    <property type="match status" value="1"/>
</dbReference>
<dbReference type="FunFam" id="3.40.50.2000:FF:000101">
    <property type="entry name" value="Glycosyltransferase"/>
    <property type="match status" value="1"/>
</dbReference>
<dbReference type="Gene3D" id="3.40.50.2000">
    <property type="entry name" value="Glycogen Phosphorylase B"/>
    <property type="match status" value="2"/>
</dbReference>
<dbReference type="InterPro" id="IPR002213">
    <property type="entry name" value="UDP_glucos_trans"/>
</dbReference>
<dbReference type="InterPro" id="IPR035595">
    <property type="entry name" value="UDP_glycos_trans_CS"/>
</dbReference>
<dbReference type="PANTHER" id="PTHR11926">
    <property type="entry name" value="GLUCOSYL/GLUCURONOSYL TRANSFERASES"/>
    <property type="match status" value="1"/>
</dbReference>
<dbReference type="PANTHER" id="PTHR11926:SF986">
    <property type="entry name" value="UDP-GLYCOSYLTRANSFERASE 84A1"/>
    <property type="match status" value="1"/>
</dbReference>
<dbReference type="Pfam" id="PF00201">
    <property type="entry name" value="UDPGT"/>
    <property type="match status" value="1"/>
</dbReference>
<dbReference type="SUPFAM" id="SSF53756">
    <property type="entry name" value="UDP-Glycosyltransferase/glycogen phosphorylase"/>
    <property type="match status" value="1"/>
</dbReference>
<dbReference type="PROSITE" id="PS00375">
    <property type="entry name" value="UDPGT"/>
    <property type="match status" value="1"/>
</dbReference>
<organism>
    <name type="scientific">Fragaria ananassa</name>
    <name type="common">Strawberry</name>
    <name type="synonym">Fragaria chiloensis x Fragaria virginiana</name>
    <dbReference type="NCBI Taxonomy" id="3747"/>
    <lineage>
        <taxon>Eukaryota</taxon>
        <taxon>Viridiplantae</taxon>
        <taxon>Streptophyta</taxon>
        <taxon>Embryophyta</taxon>
        <taxon>Tracheophyta</taxon>
        <taxon>Spermatophyta</taxon>
        <taxon>Magnoliopsida</taxon>
        <taxon>eudicotyledons</taxon>
        <taxon>Gunneridae</taxon>
        <taxon>Pentapetalae</taxon>
        <taxon>rosids</taxon>
        <taxon>fabids</taxon>
        <taxon>Rosales</taxon>
        <taxon>Rosaceae</taxon>
        <taxon>Rosoideae</taxon>
        <taxon>Potentilleae</taxon>
        <taxon>Fragariinae</taxon>
        <taxon>Fragaria</taxon>
    </lineage>
</organism>
<proteinExistence type="evidence at transcript level"/>
<accession>Q2V6K1</accession>
<sequence>MGSVGSDNTHIFLVCYPAQGHINPMLRLGKYLAAKGLLVTFSTTEDYGNKMRNANGIVDNHPTPVGNGFIRFEFFDDSLPDPDDPRRTNLEFYVPLLEKVGKELVTGMIKKHGEEGGARVSCLVNNPFIPWVCDVATELGIPCATLWIQSCAVFSAYFHYNAETVKFPTEAEPELDVQLPSTPLLKHDEIPSFLHPFDPYAILGRAILGQFKKLSKSSYILMDTIQELEPEIVEEMSKVCLVKPVGPLFKIPEATNTTIRGDLIKADDCLDWLSSKPPASVVYISFGSIVYLKQEQVDEIAHGLLSSGVSFLWVMRPPRKAAGVDMHVLPEGFLEKVGDNGKLVQWSPQEQVLAHPSLACFLTHCGWNSSVEALTLGVPVVTFPQWGDQVTNAKYLVDVFGVGLRLCRGVAENRLVLRDEVEKCLLEATVGEKAVQLKHNALKWKKVAEEAVAEGGSSQRNLHDFIDEIARTSIA</sequence>
<evidence type="ECO:0000250" key="1">
    <source>
        <dbReference type="UniProtKB" id="Q66PF4"/>
    </source>
</evidence>
<evidence type="ECO:0000255" key="2"/>
<evidence type="ECO:0000312" key="3">
    <source>
        <dbReference type="EMBL" id="ABB92747.1"/>
    </source>
</evidence>
<comment type="similarity">
    <text evidence="2">Belongs to the UDP-glycosyltransferase family.</text>
</comment>
<protein>
    <recommendedName>
        <fullName>Putative UDP-glucose glucosyltransferase</fullName>
        <shortName evidence="3">FaGT5</shortName>
        <ecNumber evidence="1">2.4.1.-</ecNumber>
    </recommendedName>
    <alternativeName>
        <fullName>Glucosyltransferase 5</fullName>
    </alternativeName>
</protein>
<keyword id="KW-0328">Glycosyltransferase</keyword>
<keyword id="KW-0808">Transferase</keyword>
<reference evidence="3" key="1">
    <citation type="submission" date="2005-11" db="EMBL/GenBank/DDBJ databases">
        <authorList>
            <person name="Griesser M."/>
            <person name="Raasch C.E."/>
            <person name="Caballero J.L."/>
            <person name="Munoz-Blanco J."/>
            <person name="Schwab W."/>
        </authorList>
    </citation>
    <scope>NUCLEOTIDE SEQUENCE [MRNA]</scope>
    <source>
        <strain evidence="3">cv. Elsanta</strain>
    </source>
</reference>